<name>BIOF_NEIMF</name>
<feature type="chain" id="PRO_0000381053" description="Putative 8-amino-7-oxononanoate synthase">
    <location>
        <begin position="1"/>
        <end position="380"/>
    </location>
</feature>
<feature type="binding site" evidence="1">
    <location>
        <position position="18"/>
    </location>
    <ligand>
        <name>substrate</name>
    </ligand>
</feature>
<feature type="binding site" evidence="1">
    <location>
        <begin position="106"/>
        <end position="107"/>
    </location>
    <ligand>
        <name>pyridoxal 5'-phosphate</name>
        <dbReference type="ChEBI" id="CHEBI:597326"/>
    </ligand>
</feature>
<feature type="binding site" evidence="1">
    <location>
        <position position="131"/>
    </location>
    <ligand>
        <name>substrate</name>
    </ligand>
</feature>
<feature type="binding site" evidence="1">
    <location>
        <position position="179"/>
    </location>
    <ligand>
        <name>pyridoxal 5'-phosphate</name>
        <dbReference type="ChEBI" id="CHEBI:597326"/>
    </ligand>
</feature>
<feature type="binding site" evidence="1">
    <location>
        <begin position="205"/>
        <end position="208"/>
    </location>
    <ligand>
        <name>pyridoxal 5'-phosphate</name>
        <dbReference type="ChEBI" id="CHEBI:597326"/>
    </ligand>
</feature>
<feature type="binding site" evidence="1">
    <location>
        <begin position="236"/>
        <end position="239"/>
    </location>
    <ligand>
        <name>pyridoxal 5'-phosphate</name>
        <dbReference type="ChEBI" id="CHEBI:597326"/>
    </ligand>
</feature>
<feature type="binding site" evidence="1">
    <location>
        <position position="352"/>
    </location>
    <ligand>
        <name>substrate</name>
    </ligand>
</feature>
<feature type="modified residue" description="N6-(pyridoxal phosphate)lysine" evidence="1">
    <location>
        <position position="239"/>
    </location>
</feature>
<organism>
    <name type="scientific">Neisseria meningitidis serogroup C / serotype 2a (strain ATCC 700532 / DSM 15464 / FAM18)</name>
    <dbReference type="NCBI Taxonomy" id="272831"/>
    <lineage>
        <taxon>Bacteria</taxon>
        <taxon>Pseudomonadati</taxon>
        <taxon>Pseudomonadota</taxon>
        <taxon>Betaproteobacteria</taxon>
        <taxon>Neisseriales</taxon>
        <taxon>Neisseriaceae</taxon>
        <taxon>Neisseria</taxon>
    </lineage>
</organism>
<sequence length="380" mass="43194">MNVFKQQLEQLGAQNQYRSIPDLIHQGRYITRENRKMLNMSSNDYLGLASDENLRRSFLQQYGGNFPSFTSSSSRLLTGNFPIYTDLEELVAQRFQRESALLFNSGYHANLGILPALTTTKSLILADKFVHASMIDGIRLSRCAFSRYRHNDYEHLKNLLEKNVGKFDRTFIVTESVFSMDGDVADLKQLVQLKKQFPNTYLYVDEAHAIGVYGQNGLGIAERDNLIAEIDLLVGTFGKALASVGAYAVCNQVLKECLINQMRPLIFSTALPPFNVAWTYFIFERLPQFSKERSHLEQLSAFLRREVAHRTQIMPSQTCIVPYILGGNEAALAKAEYLQRQGYYCLPIRPPTVPKNTSRIRLSLTADMTTDEVRQFAVCL</sequence>
<evidence type="ECO:0000250" key="1"/>
<evidence type="ECO:0000305" key="2"/>
<proteinExistence type="inferred from homology"/>
<accession>A1KVF6</accession>
<keyword id="KW-0093">Biotin biosynthesis</keyword>
<keyword id="KW-0663">Pyridoxal phosphate</keyword>
<keyword id="KW-0808">Transferase</keyword>
<dbReference type="EC" id="2.3.1.47"/>
<dbReference type="EMBL" id="AM421808">
    <property type="protein sequence ID" value="CAM10859.1"/>
    <property type="molecule type" value="Genomic_DNA"/>
</dbReference>
<dbReference type="RefSeq" id="WP_002247979.1">
    <property type="nucleotide sequence ID" value="NC_008767.1"/>
</dbReference>
<dbReference type="SMR" id="A1KVF6"/>
<dbReference type="KEGG" id="nmc:NMC1676"/>
<dbReference type="HOGENOM" id="CLU_015846_11_2_4"/>
<dbReference type="UniPathway" id="UPA00078"/>
<dbReference type="Proteomes" id="UP000002286">
    <property type="component" value="Chromosome"/>
</dbReference>
<dbReference type="GO" id="GO:0008710">
    <property type="term" value="F:8-amino-7-oxononanoate synthase activity"/>
    <property type="evidence" value="ECO:0007669"/>
    <property type="project" value="UniProtKB-EC"/>
</dbReference>
<dbReference type="GO" id="GO:0030170">
    <property type="term" value="F:pyridoxal phosphate binding"/>
    <property type="evidence" value="ECO:0007669"/>
    <property type="project" value="InterPro"/>
</dbReference>
<dbReference type="GO" id="GO:0009102">
    <property type="term" value="P:biotin biosynthetic process"/>
    <property type="evidence" value="ECO:0007669"/>
    <property type="project" value="UniProtKB-UniPathway"/>
</dbReference>
<dbReference type="CDD" id="cd06454">
    <property type="entry name" value="KBL_like"/>
    <property type="match status" value="1"/>
</dbReference>
<dbReference type="Gene3D" id="3.90.1150.10">
    <property type="entry name" value="Aspartate Aminotransferase, domain 1"/>
    <property type="match status" value="1"/>
</dbReference>
<dbReference type="Gene3D" id="3.40.640.10">
    <property type="entry name" value="Type I PLP-dependent aspartate aminotransferase-like (Major domain)"/>
    <property type="match status" value="1"/>
</dbReference>
<dbReference type="InterPro" id="IPR001917">
    <property type="entry name" value="Aminotrans_II_pyridoxalP_BS"/>
</dbReference>
<dbReference type="InterPro" id="IPR004839">
    <property type="entry name" value="Aminotransferase_I/II_large"/>
</dbReference>
<dbReference type="InterPro" id="IPR050087">
    <property type="entry name" value="AON_synthase_class-II"/>
</dbReference>
<dbReference type="InterPro" id="IPR004723">
    <property type="entry name" value="AONS_Archaea/Proteobacteria"/>
</dbReference>
<dbReference type="InterPro" id="IPR015424">
    <property type="entry name" value="PyrdxlP-dep_Trfase"/>
</dbReference>
<dbReference type="InterPro" id="IPR015421">
    <property type="entry name" value="PyrdxlP-dep_Trfase_major"/>
</dbReference>
<dbReference type="InterPro" id="IPR015422">
    <property type="entry name" value="PyrdxlP-dep_Trfase_small"/>
</dbReference>
<dbReference type="NCBIfam" id="TIGR00858">
    <property type="entry name" value="bioF"/>
    <property type="match status" value="1"/>
</dbReference>
<dbReference type="PANTHER" id="PTHR13693:SF100">
    <property type="entry name" value="8-AMINO-7-OXONONANOATE SYNTHASE"/>
    <property type="match status" value="1"/>
</dbReference>
<dbReference type="PANTHER" id="PTHR13693">
    <property type="entry name" value="CLASS II AMINOTRANSFERASE/8-AMINO-7-OXONONANOATE SYNTHASE"/>
    <property type="match status" value="1"/>
</dbReference>
<dbReference type="Pfam" id="PF00155">
    <property type="entry name" value="Aminotran_1_2"/>
    <property type="match status" value="1"/>
</dbReference>
<dbReference type="SUPFAM" id="SSF53383">
    <property type="entry name" value="PLP-dependent transferases"/>
    <property type="match status" value="1"/>
</dbReference>
<dbReference type="PROSITE" id="PS00599">
    <property type="entry name" value="AA_TRANSFER_CLASS_2"/>
    <property type="match status" value="1"/>
</dbReference>
<reference key="1">
    <citation type="journal article" date="2007" name="PLoS Genet.">
        <title>Meningococcal genetic variation mechanisms viewed through comparative analysis of serogroup C strain FAM18.</title>
        <authorList>
            <person name="Bentley S.D."/>
            <person name="Vernikos G.S."/>
            <person name="Snyder L.A.S."/>
            <person name="Churcher C."/>
            <person name="Arrowsmith C."/>
            <person name="Chillingworth T."/>
            <person name="Cronin A."/>
            <person name="Davis P.H."/>
            <person name="Holroyd N.E."/>
            <person name="Jagels K."/>
            <person name="Maddison M."/>
            <person name="Moule S."/>
            <person name="Rabbinowitsch E."/>
            <person name="Sharp S."/>
            <person name="Unwin L."/>
            <person name="Whitehead S."/>
            <person name="Quail M.A."/>
            <person name="Achtman M."/>
            <person name="Barrell B.G."/>
            <person name="Saunders N.J."/>
            <person name="Parkhill J."/>
        </authorList>
    </citation>
    <scope>NUCLEOTIDE SEQUENCE [LARGE SCALE GENOMIC DNA]</scope>
    <source>
        <strain>ATCC 700532 / DSM 15464 / FAM18</strain>
    </source>
</reference>
<gene>
    <name type="primary">bioF</name>
    <name type="ordered locus">NMC1676</name>
</gene>
<protein>
    <recommendedName>
        <fullName>Putative 8-amino-7-oxononanoate synthase</fullName>
        <shortName>AONS</shortName>
        <ecNumber>2.3.1.47</ecNumber>
    </recommendedName>
    <alternativeName>
        <fullName>7-keto-8-amino-pelargonic acid synthase</fullName>
        <shortName>7-KAP synthase</shortName>
    </alternativeName>
    <alternativeName>
        <fullName>8-amino-7-ketopelargonate synthase</fullName>
    </alternativeName>
</protein>
<comment type="function">
    <text evidence="1">Catalyzes the decarboxylative condensation of pimeloyl-[acyl-carrier protein] and L-alanine to produce 8-amino-7-oxononanoate (AON), [acyl-carrier protein], and carbon dioxide.</text>
</comment>
<comment type="catalytic activity">
    <reaction>
        <text>6-carboxyhexanoyl-[ACP] + L-alanine + H(+) = (8S)-8-amino-7-oxononanoate + holo-[ACP] + CO2</text>
        <dbReference type="Rhea" id="RHEA:42288"/>
        <dbReference type="Rhea" id="RHEA-COMP:9685"/>
        <dbReference type="Rhea" id="RHEA-COMP:9955"/>
        <dbReference type="ChEBI" id="CHEBI:15378"/>
        <dbReference type="ChEBI" id="CHEBI:16526"/>
        <dbReference type="ChEBI" id="CHEBI:57972"/>
        <dbReference type="ChEBI" id="CHEBI:64479"/>
        <dbReference type="ChEBI" id="CHEBI:78846"/>
        <dbReference type="ChEBI" id="CHEBI:149468"/>
        <dbReference type="EC" id="2.3.1.47"/>
    </reaction>
</comment>
<comment type="cofactor">
    <cofactor evidence="1">
        <name>pyridoxal 5'-phosphate</name>
        <dbReference type="ChEBI" id="CHEBI:597326"/>
    </cofactor>
</comment>
<comment type="pathway">
    <text>Cofactor biosynthesis; biotin biosynthesis.</text>
</comment>
<comment type="subunit">
    <text evidence="1">Homodimer.</text>
</comment>
<comment type="similarity">
    <text evidence="2">Belongs to the class-II pyridoxal-phosphate-dependent aminotransferase family. BioF subfamily.</text>
</comment>